<gene>
    <name evidence="1" type="primary">proB</name>
    <name type="ordered locus">Teth514_1519</name>
</gene>
<comment type="function">
    <text evidence="1">Catalyzes the transfer of a phosphate group to glutamate to form L-glutamate 5-phosphate.</text>
</comment>
<comment type="catalytic activity">
    <reaction evidence="1">
        <text>L-glutamate + ATP = L-glutamyl 5-phosphate + ADP</text>
        <dbReference type="Rhea" id="RHEA:14877"/>
        <dbReference type="ChEBI" id="CHEBI:29985"/>
        <dbReference type="ChEBI" id="CHEBI:30616"/>
        <dbReference type="ChEBI" id="CHEBI:58274"/>
        <dbReference type="ChEBI" id="CHEBI:456216"/>
        <dbReference type="EC" id="2.7.2.11"/>
    </reaction>
</comment>
<comment type="pathway">
    <text evidence="1">Amino-acid biosynthesis; L-proline biosynthesis; L-glutamate 5-semialdehyde from L-glutamate: step 1/2.</text>
</comment>
<comment type="subcellular location">
    <subcellularLocation>
        <location evidence="1">Cytoplasm</location>
    </subcellularLocation>
</comment>
<comment type="similarity">
    <text evidence="1">Belongs to the glutamate 5-kinase family.</text>
</comment>
<dbReference type="EC" id="2.7.2.11" evidence="1"/>
<dbReference type="EMBL" id="CP000923">
    <property type="protein sequence ID" value="ABY92806.1"/>
    <property type="molecule type" value="Genomic_DNA"/>
</dbReference>
<dbReference type="RefSeq" id="WP_009052326.1">
    <property type="nucleotide sequence ID" value="NC_010320.1"/>
</dbReference>
<dbReference type="SMR" id="B0K0T1"/>
<dbReference type="KEGG" id="tex:Teth514_1519"/>
<dbReference type="HOGENOM" id="CLU_025400_2_0_9"/>
<dbReference type="UniPathway" id="UPA00098">
    <property type="reaction ID" value="UER00359"/>
</dbReference>
<dbReference type="Proteomes" id="UP000002155">
    <property type="component" value="Chromosome"/>
</dbReference>
<dbReference type="GO" id="GO:0005829">
    <property type="term" value="C:cytosol"/>
    <property type="evidence" value="ECO:0007669"/>
    <property type="project" value="TreeGrafter"/>
</dbReference>
<dbReference type="GO" id="GO:0005524">
    <property type="term" value="F:ATP binding"/>
    <property type="evidence" value="ECO:0007669"/>
    <property type="project" value="UniProtKB-KW"/>
</dbReference>
<dbReference type="GO" id="GO:0004349">
    <property type="term" value="F:glutamate 5-kinase activity"/>
    <property type="evidence" value="ECO:0007669"/>
    <property type="project" value="UniProtKB-UniRule"/>
</dbReference>
<dbReference type="GO" id="GO:0003723">
    <property type="term" value="F:RNA binding"/>
    <property type="evidence" value="ECO:0007669"/>
    <property type="project" value="InterPro"/>
</dbReference>
<dbReference type="GO" id="GO:0055129">
    <property type="term" value="P:L-proline biosynthetic process"/>
    <property type="evidence" value="ECO:0007669"/>
    <property type="project" value="UniProtKB-UniRule"/>
</dbReference>
<dbReference type="CDD" id="cd04242">
    <property type="entry name" value="AAK_G5K_ProB"/>
    <property type="match status" value="1"/>
</dbReference>
<dbReference type="CDD" id="cd21157">
    <property type="entry name" value="PUA_G5K"/>
    <property type="match status" value="1"/>
</dbReference>
<dbReference type="FunFam" id="2.30.130.10:FF:000007">
    <property type="entry name" value="Glutamate 5-kinase"/>
    <property type="match status" value="1"/>
</dbReference>
<dbReference type="FunFam" id="3.40.1160.10:FF:000018">
    <property type="entry name" value="Glutamate 5-kinase"/>
    <property type="match status" value="1"/>
</dbReference>
<dbReference type="Gene3D" id="3.40.1160.10">
    <property type="entry name" value="Acetylglutamate kinase-like"/>
    <property type="match status" value="2"/>
</dbReference>
<dbReference type="Gene3D" id="2.30.130.10">
    <property type="entry name" value="PUA domain"/>
    <property type="match status" value="1"/>
</dbReference>
<dbReference type="HAMAP" id="MF_00456">
    <property type="entry name" value="ProB"/>
    <property type="match status" value="1"/>
</dbReference>
<dbReference type="InterPro" id="IPR036393">
    <property type="entry name" value="AceGlu_kinase-like_sf"/>
</dbReference>
<dbReference type="InterPro" id="IPR001048">
    <property type="entry name" value="Asp/Glu/Uridylate_kinase"/>
</dbReference>
<dbReference type="InterPro" id="IPR041739">
    <property type="entry name" value="G5K_ProB"/>
</dbReference>
<dbReference type="InterPro" id="IPR001057">
    <property type="entry name" value="Glu/AcGlu_kinase"/>
</dbReference>
<dbReference type="InterPro" id="IPR011529">
    <property type="entry name" value="Glu_5kinase"/>
</dbReference>
<dbReference type="InterPro" id="IPR005715">
    <property type="entry name" value="Glu_5kinase/COase_Synthase"/>
</dbReference>
<dbReference type="InterPro" id="IPR019797">
    <property type="entry name" value="Glutamate_5-kinase_CS"/>
</dbReference>
<dbReference type="InterPro" id="IPR002478">
    <property type="entry name" value="PUA"/>
</dbReference>
<dbReference type="InterPro" id="IPR015947">
    <property type="entry name" value="PUA-like_sf"/>
</dbReference>
<dbReference type="InterPro" id="IPR036974">
    <property type="entry name" value="PUA_sf"/>
</dbReference>
<dbReference type="NCBIfam" id="TIGR01027">
    <property type="entry name" value="proB"/>
    <property type="match status" value="1"/>
</dbReference>
<dbReference type="PANTHER" id="PTHR43654">
    <property type="entry name" value="GLUTAMATE 5-KINASE"/>
    <property type="match status" value="1"/>
</dbReference>
<dbReference type="PANTHER" id="PTHR43654:SF1">
    <property type="entry name" value="ISOPENTENYL PHOSPHATE KINASE"/>
    <property type="match status" value="1"/>
</dbReference>
<dbReference type="Pfam" id="PF00696">
    <property type="entry name" value="AA_kinase"/>
    <property type="match status" value="1"/>
</dbReference>
<dbReference type="Pfam" id="PF01472">
    <property type="entry name" value="PUA"/>
    <property type="match status" value="1"/>
</dbReference>
<dbReference type="PIRSF" id="PIRSF000729">
    <property type="entry name" value="GK"/>
    <property type="match status" value="1"/>
</dbReference>
<dbReference type="PRINTS" id="PR00474">
    <property type="entry name" value="GLU5KINASE"/>
</dbReference>
<dbReference type="SMART" id="SM00359">
    <property type="entry name" value="PUA"/>
    <property type="match status" value="1"/>
</dbReference>
<dbReference type="SUPFAM" id="SSF53633">
    <property type="entry name" value="Carbamate kinase-like"/>
    <property type="match status" value="1"/>
</dbReference>
<dbReference type="SUPFAM" id="SSF88697">
    <property type="entry name" value="PUA domain-like"/>
    <property type="match status" value="1"/>
</dbReference>
<dbReference type="PROSITE" id="PS00902">
    <property type="entry name" value="GLUTAMATE_5_KINASE"/>
    <property type="match status" value="1"/>
</dbReference>
<dbReference type="PROSITE" id="PS50890">
    <property type="entry name" value="PUA"/>
    <property type="match status" value="1"/>
</dbReference>
<evidence type="ECO:0000255" key="1">
    <source>
        <dbReference type="HAMAP-Rule" id="MF_00456"/>
    </source>
</evidence>
<feature type="chain" id="PRO_1000193712" description="Glutamate 5-kinase">
    <location>
        <begin position="1"/>
        <end position="372"/>
    </location>
</feature>
<feature type="domain" description="PUA" evidence="1">
    <location>
        <begin position="272"/>
        <end position="350"/>
    </location>
</feature>
<feature type="binding site" evidence="1">
    <location>
        <position position="6"/>
    </location>
    <ligand>
        <name>ATP</name>
        <dbReference type="ChEBI" id="CHEBI:30616"/>
    </ligand>
</feature>
<feature type="binding site" evidence="1">
    <location>
        <position position="46"/>
    </location>
    <ligand>
        <name>substrate</name>
    </ligand>
</feature>
<feature type="binding site" evidence="1">
    <location>
        <position position="133"/>
    </location>
    <ligand>
        <name>substrate</name>
    </ligand>
</feature>
<feature type="binding site" evidence="1">
    <location>
        <position position="145"/>
    </location>
    <ligand>
        <name>substrate</name>
    </ligand>
</feature>
<feature type="binding site" evidence="1">
    <location>
        <begin position="165"/>
        <end position="166"/>
    </location>
    <ligand>
        <name>ATP</name>
        <dbReference type="ChEBI" id="CHEBI:30616"/>
    </ligand>
</feature>
<feature type="binding site" evidence="1">
    <location>
        <begin position="207"/>
        <end position="213"/>
    </location>
    <ligand>
        <name>ATP</name>
        <dbReference type="ChEBI" id="CHEBI:30616"/>
    </ligand>
</feature>
<keyword id="KW-0028">Amino-acid biosynthesis</keyword>
<keyword id="KW-0067">ATP-binding</keyword>
<keyword id="KW-0963">Cytoplasm</keyword>
<keyword id="KW-0418">Kinase</keyword>
<keyword id="KW-0547">Nucleotide-binding</keyword>
<keyword id="KW-0641">Proline biosynthesis</keyword>
<keyword id="KW-0808">Transferase</keyword>
<proteinExistence type="inferred from homology"/>
<sequence>MRIVVKVGTSTLTYENGKLNLEIMEKLVRQIANLLNRGEEVVLVTSGAIGAGMGKLNLKEKPKTIPEKQSLAAIGQGLLIEIYEKFFNEYGKITAQVLLTKEDFSDRRRYLNVSYTLSNLLKWGVVPIINENDTVTVDEIKIGDNDTLAALLASLVEADILIILTDIDGLYDKDPRIYKEAKIIEVVEEFSDELFKIAGSAGTKRGTGGMYTKIQAAKICWNSGVKMIIANGKIDNVLNQIANGEKIGTTFLPMKKPISSRKVWIAFNAKVSGRLFIDEGAAKAIIKHGKSLLPSGVVKTEGDYDVGDCVAVVDHQEKEIARGLINYSSEEVEKIKGCKTHEIEKILGYKYYDEVIHRDNLVILERGEKFGS</sequence>
<reference key="1">
    <citation type="submission" date="2008-01" db="EMBL/GenBank/DDBJ databases">
        <title>Complete sequence of Thermoanaerobacter sp. X514.</title>
        <authorList>
            <consortium name="US DOE Joint Genome Institute"/>
            <person name="Copeland A."/>
            <person name="Lucas S."/>
            <person name="Lapidus A."/>
            <person name="Barry K."/>
            <person name="Glavina del Rio T."/>
            <person name="Dalin E."/>
            <person name="Tice H."/>
            <person name="Pitluck S."/>
            <person name="Bruce D."/>
            <person name="Goodwin L."/>
            <person name="Saunders E."/>
            <person name="Brettin T."/>
            <person name="Detter J.C."/>
            <person name="Han C."/>
            <person name="Schmutz J."/>
            <person name="Larimer F."/>
            <person name="Land M."/>
            <person name="Hauser L."/>
            <person name="Kyrpides N."/>
            <person name="Kim E."/>
            <person name="Hemme C."/>
            <person name="Fields M.W."/>
            <person name="He Z."/>
            <person name="Zhou J."/>
            <person name="Richardson P."/>
        </authorList>
    </citation>
    <scope>NUCLEOTIDE SEQUENCE [LARGE SCALE GENOMIC DNA]</scope>
    <source>
        <strain>X514</strain>
    </source>
</reference>
<accession>B0K0T1</accession>
<name>PROB_THEPX</name>
<organism>
    <name type="scientific">Thermoanaerobacter sp. (strain X514)</name>
    <dbReference type="NCBI Taxonomy" id="399726"/>
    <lineage>
        <taxon>Bacteria</taxon>
        <taxon>Bacillati</taxon>
        <taxon>Bacillota</taxon>
        <taxon>Clostridia</taxon>
        <taxon>Thermoanaerobacterales</taxon>
        <taxon>Thermoanaerobacteraceae</taxon>
        <taxon>Thermoanaerobacter</taxon>
    </lineage>
</organism>
<protein>
    <recommendedName>
        <fullName evidence="1">Glutamate 5-kinase</fullName>
        <ecNumber evidence="1">2.7.2.11</ecNumber>
    </recommendedName>
    <alternativeName>
        <fullName evidence="1">Gamma-glutamyl kinase</fullName>
        <shortName evidence="1">GK</shortName>
    </alternativeName>
</protein>